<sequence>MAKINKGYVANFIEENGFPEQGHFEEKKDLQAFYKHLSTEQLEEWVELEGLEVKDTDSDSIYRMRLCMAILYLNFPKKTAGKKKASPYKHISLEELVQMATDNDIEVKHTDSDKILRMRTIMALKEAGKLG</sequence>
<accession>O48405</accession>
<organism>
    <name type="scientific">Bacillus phage SP01</name>
    <name type="common">Bacteriophage SP01</name>
    <dbReference type="NCBI Taxonomy" id="2884427"/>
    <lineage>
        <taxon>Viruses</taxon>
        <taxon>Duplodnaviria</taxon>
        <taxon>Heunggongvirae</taxon>
        <taxon>Uroviricota</taxon>
        <taxon>Caudoviricetes</taxon>
        <taxon>Herelleviridae</taxon>
        <taxon>Spounavirinae</taxon>
        <taxon>Okubovirus</taxon>
        <taxon>Okubovirus SPO1</taxon>
    </lineage>
</organism>
<organismHost>
    <name type="scientific">Bacillus subtilis</name>
    <dbReference type="NCBI Taxonomy" id="1423"/>
</organismHost>
<protein>
    <recommendedName>
        <fullName>Putative gene 51 protein</fullName>
    </recommendedName>
</protein>
<dbReference type="EMBL" id="AF031901">
    <property type="protein sequence ID" value="AAC29020.1"/>
    <property type="molecule type" value="Genomic_DNA"/>
</dbReference>
<dbReference type="RefSeq" id="YP_002300295.1">
    <property type="nucleotide sequence ID" value="NC_011421.1"/>
</dbReference>
<dbReference type="SMR" id="O48405"/>
<dbReference type="GeneID" id="7009008"/>
<dbReference type="KEGG" id="vg:7009008"/>
<gene>
    <name type="primary">51</name>
</gene>
<proteinExistence type="predicted"/>
<reference key="1">
    <citation type="journal article" date="1998" name="Virology">
        <title>Genes and regulatory sites of the 'host-takeover module' in the terminal redundancy of Bacillus subtilis bacteriophage SPO1.</title>
        <authorList>
            <person name="Stewart C.R."/>
            <person name="Gaslightwala I."/>
            <person name="Hinata K."/>
            <person name="Krolikowski K.A."/>
            <person name="Needleman D.S."/>
            <person name="Peng A.S.-Y."/>
            <person name="Peterman M.A."/>
            <person name="Tobias A."/>
            <person name="Wei P."/>
        </authorList>
    </citation>
    <scope>NUCLEOTIDE SEQUENCE [GENOMIC DNA]</scope>
</reference>
<feature type="chain" id="PRO_0000106157" description="Putative gene 51 protein">
    <location>
        <begin position="1"/>
        <end position="131"/>
    </location>
</feature>
<name>GP51_BPSP1</name>